<feature type="chain" id="PRO_0000120392" description="Glutamate-1-semialdehyde 2,1-aminomutase 2">
    <location>
        <begin position="1"/>
        <end position="429"/>
    </location>
</feature>
<feature type="modified residue" description="N6-(pyridoxal phosphate)lysine" evidence="1">
    <location>
        <position position="268"/>
    </location>
</feature>
<sequence>MKTFEKSSAAFNRAKPLMPGGVNSPVRAFKSVNMDPVFMERGKGANIYDIDGNEYIDYVLSWGPLILGHADDQVVEKLKETTEKGTSFGAPSELETKLAELVIERVPSIEVVRMVNSGTEATMSALRLARGYTGRNKILKFEGCYHGHGDSLLIKAGSGVATLGLPDSPGVPETVAQNTLTVPYNDLESVRYAFEQFGDDLAGVIVEPVAGNMGVVPPEPGFLEELRRLTEENGTLLIFDEVMTGFRVGYHCAQGAFGITPDLTCLGKVIGGGLPVGAYGGKREIMEQIAPSGPIYQAGTLSGNPLAMTAGYETLVQLTEANYEYFDRLGDRLAEGLSAVAKEYDIPHYTSRAGSMVGFFFTDKKVKNFADASSSDLEFFAKYFKEMLHLGVSLPPSQFEGMFLSTKHTEADIDFTVDAARQAFKRLKK</sequence>
<reference key="1">
    <citation type="journal article" date="2000" name="Nucleic Acids Res.">
        <title>Complete genome sequence of the alkaliphilic bacterium Bacillus halodurans and genomic sequence comparison with Bacillus subtilis.</title>
        <authorList>
            <person name="Takami H."/>
            <person name="Nakasone K."/>
            <person name="Takaki Y."/>
            <person name="Maeno G."/>
            <person name="Sasaki R."/>
            <person name="Masui N."/>
            <person name="Fuji F."/>
            <person name="Hirama C."/>
            <person name="Nakamura Y."/>
            <person name="Ogasawara N."/>
            <person name="Kuhara S."/>
            <person name="Horikoshi K."/>
        </authorList>
    </citation>
    <scope>NUCLEOTIDE SEQUENCE [LARGE SCALE GENOMIC DNA]</scope>
    <source>
        <strain>ATCC BAA-125 / DSM 18197 / FERM 7344 / JCM 9153 / C-125</strain>
    </source>
</reference>
<evidence type="ECO:0000255" key="1">
    <source>
        <dbReference type="HAMAP-Rule" id="MF_00375"/>
    </source>
</evidence>
<gene>
    <name evidence="1" type="primary">hemL2</name>
    <name type="synonym">hemL</name>
    <name type="ordered locus">BH3043</name>
</gene>
<organism>
    <name type="scientific">Halalkalibacterium halodurans (strain ATCC BAA-125 / DSM 18197 / FERM 7344 / JCM 9153 / C-125)</name>
    <name type="common">Bacillus halodurans</name>
    <dbReference type="NCBI Taxonomy" id="272558"/>
    <lineage>
        <taxon>Bacteria</taxon>
        <taxon>Bacillati</taxon>
        <taxon>Bacillota</taxon>
        <taxon>Bacilli</taxon>
        <taxon>Bacillales</taxon>
        <taxon>Bacillaceae</taxon>
        <taxon>Halalkalibacterium (ex Joshi et al. 2022)</taxon>
    </lineage>
</organism>
<protein>
    <recommendedName>
        <fullName evidence="1">Glutamate-1-semialdehyde 2,1-aminomutase 2</fullName>
        <shortName evidence="1">GSA 2</shortName>
        <ecNumber evidence="1">5.4.3.8</ecNumber>
    </recommendedName>
    <alternativeName>
        <fullName evidence="1">Glutamate-1-semialdehyde aminotransferase 2</fullName>
        <shortName evidence="1">GSA-AT 2</shortName>
    </alternativeName>
</protein>
<accession>Q9K8G3</accession>
<keyword id="KW-0963">Cytoplasm</keyword>
<keyword id="KW-0413">Isomerase</keyword>
<keyword id="KW-0627">Porphyrin biosynthesis</keyword>
<keyword id="KW-0663">Pyridoxal phosphate</keyword>
<keyword id="KW-1185">Reference proteome</keyword>
<name>GSA2_HALH5</name>
<proteinExistence type="inferred from homology"/>
<dbReference type="EC" id="5.4.3.8" evidence="1"/>
<dbReference type="EMBL" id="BA000004">
    <property type="protein sequence ID" value="BAB06762.1"/>
    <property type="molecule type" value="Genomic_DNA"/>
</dbReference>
<dbReference type="PIR" id="C84030">
    <property type="entry name" value="C84030"/>
</dbReference>
<dbReference type="RefSeq" id="WP_010899187.1">
    <property type="nucleotide sequence ID" value="NC_002570.2"/>
</dbReference>
<dbReference type="SMR" id="Q9K8G3"/>
<dbReference type="STRING" id="272558.gene:10728953"/>
<dbReference type="GeneID" id="87598565"/>
<dbReference type="KEGG" id="bha:BH3043"/>
<dbReference type="eggNOG" id="COG0001">
    <property type="taxonomic scope" value="Bacteria"/>
</dbReference>
<dbReference type="HOGENOM" id="CLU_016922_1_5_9"/>
<dbReference type="OrthoDB" id="9807885at2"/>
<dbReference type="UniPathway" id="UPA00251">
    <property type="reaction ID" value="UER00317"/>
</dbReference>
<dbReference type="Proteomes" id="UP000001258">
    <property type="component" value="Chromosome"/>
</dbReference>
<dbReference type="GO" id="GO:0005737">
    <property type="term" value="C:cytoplasm"/>
    <property type="evidence" value="ECO:0007669"/>
    <property type="project" value="UniProtKB-SubCell"/>
</dbReference>
<dbReference type="GO" id="GO:0042286">
    <property type="term" value="F:glutamate-1-semialdehyde 2,1-aminomutase activity"/>
    <property type="evidence" value="ECO:0007669"/>
    <property type="project" value="UniProtKB-UniRule"/>
</dbReference>
<dbReference type="GO" id="GO:0030170">
    <property type="term" value="F:pyridoxal phosphate binding"/>
    <property type="evidence" value="ECO:0007669"/>
    <property type="project" value="InterPro"/>
</dbReference>
<dbReference type="GO" id="GO:0008483">
    <property type="term" value="F:transaminase activity"/>
    <property type="evidence" value="ECO:0007669"/>
    <property type="project" value="InterPro"/>
</dbReference>
<dbReference type="GO" id="GO:0006782">
    <property type="term" value="P:protoporphyrinogen IX biosynthetic process"/>
    <property type="evidence" value="ECO:0007669"/>
    <property type="project" value="UniProtKB-UniRule"/>
</dbReference>
<dbReference type="CDD" id="cd00610">
    <property type="entry name" value="OAT_like"/>
    <property type="match status" value="1"/>
</dbReference>
<dbReference type="FunFam" id="3.40.640.10:FF:000021">
    <property type="entry name" value="Glutamate-1-semialdehyde 2,1-aminomutase"/>
    <property type="match status" value="1"/>
</dbReference>
<dbReference type="Gene3D" id="3.90.1150.10">
    <property type="entry name" value="Aspartate Aminotransferase, domain 1"/>
    <property type="match status" value="1"/>
</dbReference>
<dbReference type="Gene3D" id="3.40.640.10">
    <property type="entry name" value="Type I PLP-dependent aspartate aminotransferase-like (Major domain)"/>
    <property type="match status" value="1"/>
</dbReference>
<dbReference type="HAMAP" id="MF_00375">
    <property type="entry name" value="HemL_aminotrans_3"/>
    <property type="match status" value="1"/>
</dbReference>
<dbReference type="InterPro" id="IPR004639">
    <property type="entry name" value="4pyrrol_synth_GluAld_NH2Trfase"/>
</dbReference>
<dbReference type="InterPro" id="IPR005814">
    <property type="entry name" value="Aminotrans_3"/>
</dbReference>
<dbReference type="InterPro" id="IPR049704">
    <property type="entry name" value="Aminotrans_3_PPA_site"/>
</dbReference>
<dbReference type="InterPro" id="IPR015424">
    <property type="entry name" value="PyrdxlP-dep_Trfase"/>
</dbReference>
<dbReference type="InterPro" id="IPR015421">
    <property type="entry name" value="PyrdxlP-dep_Trfase_major"/>
</dbReference>
<dbReference type="InterPro" id="IPR015422">
    <property type="entry name" value="PyrdxlP-dep_Trfase_small"/>
</dbReference>
<dbReference type="NCBIfam" id="TIGR00713">
    <property type="entry name" value="hemL"/>
    <property type="match status" value="1"/>
</dbReference>
<dbReference type="NCBIfam" id="NF000818">
    <property type="entry name" value="PRK00062.1"/>
    <property type="match status" value="1"/>
</dbReference>
<dbReference type="PANTHER" id="PTHR43713">
    <property type="entry name" value="GLUTAMATE-1-SEMIALDEHYDE 2,1-AMINOMUTASE"/>
    <property type="match status" value="1"/>
</dbReference>
<dbReference type="PANTHER" id="PTHR43713:SF3">
    <property type="entry name" value="GLUTAMATE-1-SEMIALDEHYDE 2,1-AMINOMUTASE 1, CHLOROPLASTIC-RELATED"/>
    <property type="match status" value="1"/>
</dbReference>
<dbReference type="Pfam" id="PF00202">
    <property type="entry name" value="Aminotran_3"/>
    <property type="match status" value="1"/>
</dbReference>
<dbReference type="SUPFAM" id="SSF53383">
    <property type="entry name" value="PLP-dependent transferases"/>
    <property type="match status" value="1"/>
</dbReference>
<dbReference type="PROSITE" id="PS00600">
    <property type="entry name" value="AA_TRANSFER_CLASS_3"/>
    <property type="match status" value="1"/>
</dbReference>
<comment type="catalytic activity">
    <reaction evidence="1">
        <text>(S)-4-amino-5-oxopentanoate = 5-aminolevulinate</text>
        <dbReference type="Rhea" id="RHEA:14265"/>
        <dbReference type="ChEBI" id="CHEBI:57501"/>
        <dbReference type="ChEBI" id="CHEBI:356416"/>
        <dbReference type="EC" id="5.4.3.8"/>
    </reaction>
</comment>
<comment type="cofactor">
    <cofactor evidence="1">
        <name>pyridoxal 5'-phosphate</name>
        <dbReference type="ChEBI" id="CHEBI:597326"/>
    </cofactor>
</comment>
<comment type="pathway">
    <text evidence="1">Porphyrin-containing compound metabolism; protoporphyrin-IX biosynthesis; 5-aminolevulinate from L-glutamyl-tRNA(Glu): step 2/2.</text>
</comment>
<comment type="subunit">
    <text evidence="1">Homodimer.</text>
</comment>
<comment type="subcellular location">
    <subcellularLocation>
        <location evidence="1">Cytoplasm</location>
    </subcellularLocation>
</comment>
<comment type="similarity">
    <text evidence="1">Belongs to the class-III pyridoxal-phosphate-dependent aminotransferase family. HemL subfamily.</text>
</comment>